<sequence>MSDQDHSMDEVTAVKIEKGVGGNNGGSGNGGGAAFSQTRSSSTGSSSSSGGGGGQESQPSPLALLAATCSRIESPNENSNNSQGPSQSGGTGELDLTATQLSQGANGWQIISSSSGATPTSKEQSGNSTNGSNGSESSKNRTVSGGQYVVAATPNLQNQQVLTGLPGVMPNIQYQVIPQFQTVDGQQLQFAATGAQVQQDGSGQIQIIPGANQQIITNRGSGGNIIAAMPNLLQQAVPLQGLANNVLSGQTQYVTNVPVALNGNITLLPVNSVSAATLTPSSQAGTISSSGSQESGSQPVTSGTAISSASLVSSQASSSSFFTNANSYSTTTTTSNMGIMNFTSSGSSGTSSQGQTSQRVGGLQGSDSLNIQQNQTSGGSLQGSQQKEGEQSQQTQQQQILIQPQLVQGGQALQALQAAPLSGQTFTTQAISQETLQNLQLQAVQNSGPIIIRTPTVGPNGQVSWQTLQLQNLQVQNPQAQTITLAPMQGVSLGQTSSSNTTLTPIASAASIPAGTVTVNAAQLSSMPGLQTINLSALGTSGIQVHQLPGLPLAIANTPGDHGAQLGLHGPGGDGIHDETAGGEEGENSPDPQPQAGRRTRREACTCPYCKDSEGRGSGDPGKKKQHICHIQGCGKVYGKTSHLRAHLRWHTGERPFMCNWSYCGKRFTRSDELQRHKRTHTGEKKFACPECPKRFMRSDHLSKHIKTHQNKKGGPGVALSVGTLPLDSGAGSEGSGTATPSALITTNMVAMEAICPEGIARLANSGINVMQVTELQSINISGNGF</sequence>
<comment type="function">
    <text evidence="2 3 7">Transcription factor that can activate or repress transcription in response to physiological and pathological stimuli. Binds with high affinity to GC-rich motifs and regulates the expression of a large number of genes involved in a variety of processes such as cell growth, apoptosis, differentiation and immune responses. Highly regulated by post-translational modifications (phosphorylations, sumoylation, proteolytic cleavage, glycosylation and acetylation). Also binds the PDGFR-alpha G-box promoter. May have a role in modulating the cellular response to DNA damage. Implicated in chromatin remodeling. Plays an essential role in the regulation of FE65 gene expression. Positively regulates the transcription of the core clock component BMAL1 (By similarity). Plays a role in the recruitment of SMARCA4/BRG1 on the c-FOS promoter (PubMed:19081374). Plays a role in protecting cells against oxidative stress following brain injury by regulating the expression of RNF112 (By similarity).</text>
</comment>
<comment type="subunit">
    <text evidence="2 3 7">Interacts with ATF7IP, ATF7IP2, BAHD1, POGZ, HCFC1, AATF and PHC2. Interacts with SV40 VP2/3 proteins. Interacts with SV40 major capsid protein VP1; this interaction leads to a cooperativity between the 2 proteins in DNA binding. Interacts with HLTF; the interaction may be required for basal transcriptional activity of HLTF. Interacts (deacetylated form) with EP300; the interaction enhances gene expression. Interacts with HDAC1 and JUN. Interacts with ELF1; the interaction is inhibited by glycosylation of SP1. Interaction with NFYA; the interaction is inhibited by glycosylation of SP1 (By similarity). Interacts with SMARCA4/BRG1 (PubMed:19081374). Interacts with ATF7IP and TBP. Interacts with MEIS2 and PBX1. Interacts with EGR1. Interacts with RNF112 in an oxidative stress-regulated manner (By similarity). Interacts with ZBTB7A; ZBTB7A prevents the binding to GC-rich motifs in promoters and represses the transcriptional activity of SP1 (By similarity). Interacts with DDX3X; this interaction potentiates SP1-induced CDKN1A/WAF1/CIP1 transcription (By similarity). Interacts with MSX1; the interaction may inhibit MSX1 autoinactivation (By similarity). Interacts with MSX3 (By similarity).</text>
</comment>
<comment type="interaction">
    <interactant intactId="EBI-862787">
        <id>Q01714</id>
    </interactant>
    <interactant intactId="EBI-862695">
        <id>P18576</id>
        <label>Nfya</label>
    </interactant>
    <organismsDiffer>false</organismsDiffer>
    <experiments>2</experiments>
</comment>
<comment type="subcellular location">
    <subcellularLocation>
        <location evidence="2">Nucleus</location>
    </subcellularLocation>
    <subcellularLocation>
        <location evidence="1">Cytoplasm</location>
    </subcellularLocation>
    <text evidence="1">Nuclear location is governed by glycosylated/phosphorylated states. Insulin promotes nuclear location, while glucagon favors cytoplasmic location (By similarity).</text>
</comment>
<comment type="tissue specificity">
    <text evidence="6">Expressed in all tissues tested, including lung, kidney, spleen and thymus.</text>
</comment>
<comment type="domain">
    <text evidence="3">The 9aaTAD motif is a transactivation domain present in a large number of yeast and animal transcription factors.</text>
</comment>
<comment type="PTM">
    <text evidence="1">Phosphorylated on multiple serine and threonine residues. Phosphorylation is coupled to ubiquitination, sumoylation and proteolytic processing. Phosphorylation on Ser-60 enhances proteolytic cleavage. Phosphorylation on Ser-7 enhances ubiquitination and protein degradation. Hyperphosphorylation on Ser-102 in response to DNA damage has no effect on transcriptional activity. MAPK1/MAPK3-mediated phosphorylation on Thr-454 and Thr-740 enhances VEGF transcription but, represses FGF2-triggered PDGFR-alpha transcription. Also implicated in the repression of RECK by ERBB2. Hyperphosphorylated on Thr-279 and Thr-740 during mitosis by MAPK8 shielding SP1 from degradation by the ubiquitin-dependent pathway. Phosphorylated in the zinc-finger domain by calmodulin-activated PKCzeta. Phosphorylation on Ser-642 by PKCzeta is critical for TSA-activated LHR gene expression through release of its repressor, p107. Phosphorylation on Thr-669, Ser-671 and Thr-682 is stimulated by angiotensin II via the AT1 receptor inducing increased binding to the PDGF-D promoter. This phosphorylation is increased in injured artey wall. Ser-60 and Thr-682 can both be dephosphorylated by PP2A during cell-cycle interphase. Dephosphorylation on Ser-60 leads to increased chromatin association during interphase and increases the transcriptional activity. On insulin stimulation, sequentially glycosylated and phosphorylated on several C-terminal serine and threonine residues (By similarity).</text>
</comment>
<comment type="PTM">
    <text evidence="3">Acetylated. Acetylation/deacetylation events affect transcriptional activity. Deacetylation leads to an increase in the expression of the 12(s)-lipooxygenase gene through recruitment of p300 to the promoter. Deacetylated by HDAC6 which leads to increased expression of ENG and positive regulation of angiogenesis.</text>
</comment>
<comment type="PTM">
    <text evidence="1">Ubiquitinated. Ubiquitination occurs on the C-terminal proteolytically-cleaved peptide and is triggered by phosphorylation (By similarity).</text>
</comment>
<comment type="PTM">
    <text evidence="1">Sumoylated with SUMO1. Sumoylation modulates proteolytic cleavage of the N-terminal repressor domain. Sumoylation levels are attenuated during tumorigenesis. Phosphorylation mediates SP1 desumoylation (By similarity).</text>
</comment>
<comment type="PTM">
    <text evidence="1">Proteolytic cleavage in the N-terminal repressor domain is prevented by sumoylation. The C-terminal cleaved product is susceptible to degradation (By similarity).</text>
</comment>
<comment type="PTM">
    <text evidence="1">O-glycosylated; Contains 8 N-acetylglucosamine side chains. Levels are controlled by insulin and the SP1 phosphorylation states. Insulin-mediated O-glycosylation locates SP1 to the nucleus, where it is sequentially deglycosylated and phosphorylated. O-glycosylation affects transcriptional activity through disrupting the interaction with a number of transcription factors including ELF1 and NFYA. Inhibited by peroxisomome proliferator receptor gamma (PPARgamma) (By similarity).</text>
</comment>
<comment type="similarity">
    <text evidence="8">Belongs to the Sp1 C2H2-type zinc-finger protein family.</text>
</comment>
<protein>
    <recommendedName>
        <fullName>Transcription factor Sp1</fullName>
    </recommendedName>
</protein>
<gene>
    <name type="primary">Sp1</name>
</gene>
<name>SP1_RAT</name>
<organism>
    <name type="scientific">Rattus norvegicus</name>
    <name type="common">Rat</name>
    <dbReference type="NCBI Taxonomy" id="10116"/>
    <lineage>
        <taxon>Eukaryota</taxon>
        <taxon>Metazoa</taxon>
        <taxon>Chordata</taxon>
        <taxon>Craniata</taxon>
        <taxon>Vertebrata</taxon>
        <taxon>Euteleostomi</taxon>
        <taxon>Mammalia</taxon>
        <taxon>Eutheria</taxon>
        <taxon>Euarchontoglires</taxon>
        <taxon>Glires</taxon>
        <taxon>Rodentia</taxon>
        <taxon>Myomorpha</taxon>
        <taxon>Muroidea</taxon>
        <taxon>Muridae</taxon>
        <taxon>Murinae</taxon>
        <taxon>Rattus</taxon>
    </lineage>
</organism>
<proteinExistence type="evidence at protein level"/>
<evidence type="ECO:0000250" key="1"/>
<evidence type="ECO:0000250" key="2">
    <source>
        <dbReference type="UniProtKB" id="O89090"/>
    </source>
</evidence>
<evidence type="ECO:0000250" key="3">
    <source>
        <dbReference type="UniProtKB" id="P08047"/>
    </source>
</evidence>
<evidence type="ECO:0000255" key="4">
    <source>
        <dbReference type="PROSITE-ProRule" id="PRU00042"/>
    </source>
</evidence>
<evidence type="ECO:0000256" key="5">
    <source>
        <dbReference type="SAM" id="MobiDB-lite"/>
    </source>
</evidence>
<evidence type="ECO:0000269" key="6">
    <source>
    </source>
</evidence>
<evidence type="ECO:0000269" key="7">
    <source>
    </source>
</evidence>
<evidence type="ECO:0000305" key="8"/>
<evidence type="ECO:0007744" key="9">
    <source>
    </source>
</evidence>
<dbReference type="EMBL" id="D12768">
    <property type="protein sequence ID" value="BAA02235.1"/>
    <property type="molecule type" value="mRNA"/>
</dbReference>
<dbReference type="EMBL" id="AB077988">
    <property type="protein sequence ID" value="BAC05486.1"/>
    <property type="molecule type" value="Genomic_DNA"/>
</dbReference>
<dbReference type="PIR" id="JS0747">
    <property type="entry name" value="JS0747"/>
</dbReference>
<dbReference type="RefSeq" id="NP_036787.2">
    <property type="nucleotide sequence ID" value="NM_012655.2"/>
</dbReference>
<dbReference type="SMR" id="Q01714"/>
<dbReference type="BioGRID" id="246914">
    <property type="interactions" value="7"/>
</dbReference>
<dbReference type="FunCoup" id="Q01714">
    <property type="interactions" value="3942"/>
</dbReference>
<dbReference type="IntAct" id="Q01714">
    <property type="interactions" value="2"/>
</dbReference>
<dbReference type="MINT" id="Q01714"/>
<dbReference type="STRING" id="10116.ENSRNOP00000019403"/>
<dbReference type="GlyCosmos" id="Q01714">
    <property type="glycosylation" value="6 sites, No reported glycans"/>
</dbReference>
<dbReference type="GlyGen" id="Q01714">
    <property type="glycosylation" value="8 sites, 1 O-linked glycan (6 sites)"/>
</dbReference>
<dbReference type="iPTMnet" id="Q01714"/>
<dbReference type="PhosphoSitePlus" id="Q01714"/>
<dbReference type="PaxDb" id="10116-ENSRNOP00000019403"/>
<dbReference type="Ensembl" id="ENSRNOT00000019403.7">
    <property type="protein sequence ID" value="ENSRNOP00000019403.5"/>
    <property type="gene ID" value="ENSRNOG00000014084.7"/>
</dbReference>
<dbReference type="GeneID" id="24790"/>
<dbReference type="KEGG" id="rno:24790"/>
<dbReference type="UCSC" id="RGD:3738">
    <property type="organism name" value="rat"/>
</dbReference>
<dbReference type="AGR" id="RGD:3738"/>
<dbReference type="CTD" id="6667"/>
<dbReference type="RGD" id="3738">
    <property type="gene designation" value="Sp1"/>
</dbReference>
<dbReference type="eggNOG" id="KOG1721">
    <property type="taxonomic scope" value="Eukaryota"/>
</dbReference>
<dbReference type="GeneTree" id="ENSGT00940000157804"/>
<dbReference type="HOGENOM" id="CLU_019688_2_0_1"/>
<dbReference type="InParanoid" id="Q01714"/>
<dbReference type="OMA" id="IMNFAPS"/>
<dbReference type="OrthoDB" id="6365676at2759"/>
<dbReference type="PhylomeDB" id="Q01714"/>
<dbReference type="TreeFam" id="TF350150"/>
<dbReference type="Reactome" id="R-RNO-2173796">
    <property type="pathway name" value="SMAD2/SMAD3:SMAD4 heterotrimer regulates transcription"/>
</dbReference>
<dbReference type="Reactome" id="R-RNO-6807505">
    <property type="pathway name" value="RNA polymerase II transcribes snRNA genes"/>
</dbReference>
<dbReference type="Reactome" id="R-RNO-9762293">
    <property type="pathway name" value="Regulation of CDH11 gene transcription"/>
</dbReference>
<dbReference type="PRO" id="PR:Q01714"/>
<dbReference type="Proteomes" id="UP000002494">
    <property type="component" value="Chromosome 7"/>
</dbReference>
<dbReference type="Bgee" id="ENSRNOG00000014084">
    <property type="expression patterns" value="Expressed in spleen and 19 other cell types or tissues"/>
</dbReference>
<dbReference type="GO" id="GO:0000785">
    <property type="term" value="C:chromatin"/>
    <property type="evidence" value="ECO:0000314"/>
    <property type="project" value="ParkinsonsUK-UCL"/>
</dbReference>
<dbReference type="GO" id="GO:0005737">
    <property type="term" value="C:cytoplasm"/>
    <property type="evidence" value="ECO:0007669"/>
    <property type="project" value="UniProtKB-SubCell"/>
</dbReference>
<dbReference type="GO" id="GO:0000791">
    <property type="term" value="C:euchromatin"/>
    <property type="evidence" value="ECO:0000266"/>
    <property type="project" value="RGD"/>
</dbReference>
<dbReference type="GO" id="GO:0005654">
    <property type="term" value="C:nucleoplasm"/>
    <property type="evidence" value="ECO:0000266"/>
    <property type="project" value="RGD"/>
</dbReference>
<dbReference type="GO" id="GO:0005634">
    <property type="term" value="C:nucleus"/>
    <property type="evidence" value="ECO:0000314"/>
    <property type="project" value="UniProtKB"/>
</dbReference>
<dbReference type="GO" id="GO:0032993">
    <property type="term" value="C:protein-DNA complex"/>
    <property type="evidence" value="ECO:0000314"/>
    <property type="project" value="RGD"/>
</dbReference>
<dbReference type="GO" id="GO:0017053">
    <property type="term" value="C:transcription repressor complex"/>
    <property type="evidence" value="ECO:0000266"/>
    <property type="project" value="RGD"/>
</dbReference>
<dbReference type="GO" id="GO:0043425">
    <property type="term" value="F:bHLH transcription factor binding"/>
    <property type="evidence" value="ECO:0000266"/>
    <property type="project" value="RGD"/>
</dbReference>
<dbReference type="GO" id="GO:0000987">
    <property type="term" value="F:cis-regulatory region sequence-specific DNA binding"/>
    <property type="evidence" value="ECO:0000266"/>
    <property type="project" value="RGD"/>
</dbReference>
<dbReference type="GO" id="GO:0003677">
    <property type="term" value="F:DNA binding"/>
    <property type="evidence" value="ECO:0000266"/>
    <property type="project" value="RGD"/>
</dbReference>
<dbReference type="GO" id="GO:0001228">
    <property type="term" value="F:DNA-binding transcription activator activity, RNA polymerase II-specific"/>
    <property type="evidence" value="ECO:0000266"/>
    <property type="project" value="RGD"/>
</dbReference>
<dbReference type="GO" id="GO:0003700">
    <property type="term" value="F:DNA-binding transcription factor activity"/>
    <property type="evidence" value="ECO:0000266"/>
    <property type="project" value="RGD"/>
</dbReference>
<dbReference type="GO" id="GO:0000981">
    <property type="term" value="F:DNA-binding transcription factor activity, RNA polymerase II-specific"/>
    <property type="evidence" value="ECO:0000266"/>
    <property type="project" value="RGD"/>
</dbReference>
<dbReference type="GO" id="GO:0003690">
    <property type="term" value="F:double-stranded DNA binding"/>
    <property type="evidence" value="ECO:0000314"/>
    <property type="project" value="RGD"/>
</dbReference>
<dbReference type="GO" id="GO:0035035">
    <property type="term" value="F:histone acetyltransferase binding"/>
    <property type="evidence" value="ECO:0000353"/>
    <property type="project" value="RGD"/>
</dbReference>
<dbReference type="GO" id="GO:0042826">
    <property type="term" value="F:histone deacetylase binding"/>
    <property type="evidence" value="ECO:0000266"/>
    <property type="project" value="RGD"/>
</dbReference>
<dbReference type="GO" id="GO:0042802">
    <property type="term" value="F:identical protein binding"/>
    <property type="evidence" value="ECO:0000266"/>
    <property type="project" value="RGD"/>
</dbReference>
<dbReference type="GO" id="GO:0060090">
    <property type="term" value="F:molecular adaptor activity"/>
    <property type="evidence" value="ECO:0000266"/>
    <property type="project" value="RGD"/>
</dbReference>
<dbReference type="GO" id="GO:0042803">
    <property type="term" value="F:protein homodimerization activity"/>
    <property type="evidence" value="ECO:0000266"/>
    <property type="project" value="RGD"/>
</dbReference>
<dbReference type="GO" id="GO:0000978">
    <property type="term" value="F:RNA polymerase II cis-regulatory region sequence-specific DNA binding"/>
    <property type="evidence" value="ECO:0000314"/>
    <property type="project" value="ParkinsonsUK-UCL"/>
</dbReference>
<dbReference type="GO" id="GO:0000977">
    <property type="term" value="F:RNA polymerase II transcription regulatory region sequence-specific DNA binding"/>
    <property type="evidence" value="ECO:0000315"/>
    <property type="project" value="UniProtKB"/>
</dbReference>
<dbReference type="GO" id="GO:0061629">
    <property type="term" value="F:RNA polymerase II-specific DNA-binding transcription factor binding"/>
    <property type="evidence" value="ECO:0000266"/>
    <property type="project" value="RGD"/>
</dbReference>
<dbReference type="GO" id="GO:0043565">
    <property type="term" value="F:sequence-specific DNA binding"/>
    <property type="evidence" value="ECO:0000314"/>
    <property type="project" value="RGD"/>
</dbReference>
<dbReference type="GO" id="GO:1990837">
    <property type="term" value="F:sequence-specific double-stranded DNA binding"/>
    <property type="evidence" value="ECO:0000266"/>
    <property type="project" value="RGD"/>
</dbReference>
<dbReference type="GO" id="GO:0000976">
    <property type="term" value="F:transcription cis-regulatory region binding"/>
    <property type="evidence" value="ECO:0000266"/>
    <property type="project" value="RGD"/>
</dbReference>
<dbReference type="GO" id="GO:0001221">
    <property type="term" value="F:transcription coregulator binding"/>
    <property type="evidence" value="ECO:0000353"/>
    <property type="project" value="ARUK-UCL"/>
</dbReference>
<dbReference type="GO" id="GO:0008270">
    <property type="term" value="F:zinc ion binding"/>
    <property type="evidence" value="ECO:0007669"/>
    <property type="project" value="UniProtKB-KW"/>
</dbReference>
<dbReference type="GO" id="GO:0071391">
    <property type="term" value="P:cellular response to estrogen stimulus"/>
    <property type="evidence" value="ECO:0000270"/>
    <property type="project" value="RGD"/>
</dbReference>
<dbReference type="GO" id="GO:0032869">
    <property type="term" value="P:cellular response to insulin stimulus"/>
    <property type="evidence" value="ECO:0000314"/>
    <property type="project" value="ParkinsonsUK-UCL"/>
</dbReference>
<dbReference type="GO" id="GO:1904568">
    <property type="term" value="P:cellular response to wortmannin"/>
    <property type="evidence" value="ECO:0000270"/>
    <property type="project" value="RGD"/>
</dbReference>
<dbReference type="GO" id="GO:0034224">
    <property type="term" value="P:cellular response to zinc ion starvation"/>
    <property type="evidence" value="ECO:0000270"/>
    <property type="project" value="RGD"/>
</dbReference>
<dbReference type="GO" id="GO:0060216">
    <property type="term" value="P:definitive hemopoiesis"/>
    <property type="evidence" value="ECO:0000266"/>
    <property type="project" value="RGD"/>
</dbReference>
<dbReference type="GO" id="GO:0048596">
    <property type="term" value="P:embryonic camera-type eye morphogenesis"/>
    <property type="evidence" value="ECO:0000266"/>
    <property type="project" value="RGD"/>
</dbReference>
<dbReference type="GO" id="GO:0001892">
    <property type="term" value="P:embryonic placenta development"/>
    <property type="evidence" value="ECO:0000266"/>
    <property type="project" value="RGD"/>
</dbReference>
<dbReference type="GO" id="GO:0060136">
    <property type="term" value="P:embryonic process involved in female pregnancy"/>
    <property type="evidence" value="ECO:0000266"/>
    <property type="project" value="RGD"/>
</dbReference>
<dbReference type="GO" id="GO:0048706">
    <property type="term" value="P:embryonic skeletal system development"/>
    <property type="evidence" value="ECO:0000266"/>
    <property type="project" value="RGD"/>
</dbReference>
<dbReference type="GO" id="GO:0043353">
    <property type="term" value="P:enucleate erythrocyte differentiation"/>
    <property type="evidence" value="ECO:0000266"/>
    <property type="project" value="RGD"/>
</dbReference>
<dbReference type="GO" id="GO:0001701">
    <property type="term" value="P:in utero embryonic development"/>
    <property type="evidence" value="ECO:0000266"/>
    <property type="project" value="RGD"/>
</dbReference>
<dbReference type="GO" id="GO:0001889">
    <property type="term" value="P:liver development"/>
    <property type="evidence" value="ECO:0000266"/>
    <property type="project" value="RGD"/>
</dbReference>
<dbReference type="GO" id="GO:0030324">
    <property type="term" value="P:lung development"/>
    <property type="evidence" value="ECO:0000266"/>
    <property type="project" value="RGD"/>
</dbReference>
<dbReference type="GO" id="GO:0030219">
    <property type="term" value="P:megakaryocyte differentiation"/>
    <property type="evidence" value="ECO:0000266"/>
    <property type="project" value="RGD"/>
</dbReference>
<dbReference type="GO" id="GO:0042789">
    <property type="term" value="P:mRNA transcription by RNA polymerase II"/>
    <property type="evidence" value="ECO:0000266"/>
    <property type="project" value="RGD"/>
</dbReference>
<dbReference type="GO" id="GO:0002318">
    <property type="term" value="P:myeloid progenitor cell differentiation"/>
    <property type="evidence" value="ECO:0000266"/>
    <property type="project" value="RGD"/>
</dbReference>
<dbReference type="GO" id="GO:0001503">
    <property type="term" value="P:ossification"/>
    <property type="evidence" value="ECO:0000266"/>
    <property type="project" value="RGD"/>
</dbReference>
<dbReference type="GO" id="GO:0043923">
    <property type="term" value="P:positive regulation by host of viral transcription"/>
    <property type="evidence" value="ECO:0007669"/>
    <property type="project" value="Ensembl"/>
</dbReference>
<dbReference type="GO" id="GO:1902004">
    <property type="term" value="P:positive regulation of amyloid-beta formation"/>
    <property type="evidence" value="ECO:0000266"/>
    <property type="project" value="RGD"/>
</dbReference>
<dbReference type="GO" id="GO:0045766">
    <property type="term" value="P:positive regulation of angiogenesis"/>
    <property type="evidence" value="ECO:0000266"/>
    <property type="project" value="RGD"/>
</dbReference>
<dbReference type="GO" id="GO:2001235">
    <property type="term" value="P:positive regulation of apoptotic signaling pathway"/>
    <property type="evidence" value="ECO:0000266"/>
    <property type="project" value="RGD"/>
</dbReference>
<dbReference type="GO" id="GO:0043536">
    <property type="term" value="P:positive regulation of blood vessel endothelial cell migration"/>
    <property type="evidence" value="ECO:0000266"/>
    <property type="project" value="RGD"/>
</dbReference>
<dbReference type="GO" id="GO:0045893">
    <property type="term" value="P:positive regulation of DNA-templated transcription"/>
    <property type="evidence" value="ECO:0000250"/>
    <property type="project" value="UniProtKB"/>
</dbReference>
<dbReference type="GO" id="GO:0010628">
    <property type="term" value="P:positive regulation of gene expression"/>
    <property type="evidence" value="ECO:0000266"/>
    <property type="project" value="RGD"/>
</dbReference>
<dbReference type="GO" id="GO:1904828">
    <property type="term" value="P:positive regulation of hydrogen sulfide biosynthetic process"/>
    <property type="evidence" value="ECO:0000266"/>
    <property type="project" value="RGD"/>
</dbReference>
<dbReference type="GO" id="GO:0045944">
    <property type="term" value="P:positive regulation of transcription by RNA polymerase II"/>
    <property type="evidence" value="ECO:0000315"/>
    <property type="project" value="ParkinsonsUK-UCL"/>
</dbReference>
<dbReference type="GO" id="GO:1905564">
    <property type="term" value="P:positive regulation of vascular endothelial cell proliferation"/>
    <property type="evidence" value="ECO:0000266"/>
    <property type="project" value="RGD"/>
</dbReference>
<dbReference type="GO" id="GO:0006355">
    <property type="term" value="P:regulation of DNA-templated transcription"/>
    <property type="evidence" value="ECO:0000250"/>
    <property type="project" value="UniProtKB"/>
</dbReference>
<dbReference type="GO" id="GO:0006357">
    <property type="term" value="P:regulation of transcription by RNA polymerase II"/>
    <property type="evidence" value="ECO:0000315"/>
    <property type="project" value="RGD"/>
</dbReference>
<dbReference type="GO" id="GO:0033194">
    <property type="term" value="P:response to hydroperoxide"/>
    <property type="evidence" value="ECO:0000250"/>
    <property type="project" value="UniProtKB"/>
</dbReference>
<dbReference type="GO" id="GO:0048511">
    <property type="term" value="P:rhythmic process"/>
    <property type="evidence" value="ECO:0007669"/>
    <property type="project" value="UniProtKB-KW"/>
</dbReference>
<dbReference type="GO" id="GO:0001829">
    <property type="term" value="P:trophectodermal cell differentiation"/>
    <property type="evidence" value="ECO:0000266"/>
    <property type="project" value="RGD"/>
</dbReference>
<dbReference type="CDD" id="cd22539">
    <property type="entry name" value="SP1_N"/>
    <property type="match status" value="1"/>
</dbReference>
<dbReference type="FunFam" id="3.30.160.60:FF:000014">
    <property type="entry name" value="Transcription factor Sp3"/>
    <property type="match status" value="1"/>
</dbReference>
<dbReference type="FunFam" id="3.30.160.60:FF:000026">
    <property type="entry name" value="Transcription factor Sp3"/>
    <property type="match status" value="1"/>
</dbReference>
<dbReference type="FunFam" id="3.30.160.60:FF:000061">
    <property type="entry name" value="Transcription factor Sp3"/>
    <property type="match status" value="1"/>
</dbReference>
<dbReference type="Gene3D" id="3.30.160.60">
    <property type="entry name" value="Classic Zinc Finger"/>
    <property type="match status" value="3"/>
</dbReference>
<dbReference type="InterPro" id="IPR036236">
    <property type="entry name" value="Znf_C2H2_sf"/>
</dbReference>
<dbReference type="InterPro" id="IPR013087">
    <property type="entry name" value="Znf_C2H2_type"/>
</dbReference>
<dbReference type="PANTHER" id="PTHR23235">
    <property type="entry name" value="KRUEPPEL-LIKE TRANSCRIPTION FACTOR"/>
    <property type="match status" value="1"/>
</dbReference>
<dbReference type="PANTHER" id="PTHR23235:SF16">
    <property type="entry name" value="TRANSCRIPTION FACTOR SP1"/>
    <property type="match status" value="1"/>
</dbReference>
<dbReference type="Pfam" id="PF00096">
    <property type="entry name" value="zf-C2H2"/>
    <property type="match status" value="2"/>
</dbReference>
<dbReference type="SMART" id="SM00355">
    <property type="entry name" value="ZnF_C2H2"/>
    <property type="match status" value="3"/>
</dbReference>
<dbReference type="SUPFAM" id="SSF57667">
    <property type="entry name" value="beta-beta-alpha zinc fingers"/>
    <property type="match status" value="1"/>
</dbReference>
<dbReference type="PROSITE" id="PS00028">
    <property type="entry name" value="ZINC_FINGER_C2H2_1"/>
    <property type="match status" value="3"/>
</dbReference>
<dbReference type="PROSITE" id="PS50157">
    <property type="entry name" value="ZINC_FINGER_C2H2_2"/>
    <property type="match status" value="3"/>
</dbReference>
<reference key="1">
    <citation type="journal article" date="1992" name="EMBO J.">
        <title>Two regulatory proteins that bind to the basic transcription element (BTE), a GC box sequence in the promoter region of the rat P-4501A1 gene.</title>
        <authorList>
            <person name="Imataka H."/>
            <person name="Sogawa K."/>
            <person name="Yasumoto K."/>
            <person name="Kikuchi Y."/>
            <person name="Sasano K."/>
            <person name="Kobayashi A."/>
            <person name="Hayami M."/>
            <person name="Fujii-Kuriyama Y."/>
        </authorList>
    </citation>
    <scope>NUCLEOTIDE SEQUENCE [MRNA]</scope>
    <source>
        <strain>Sprague-Dawley</strain>
        <tissue>Liver</tissue>
    </source>
</reference>
<reference key="2">
    <citation type="journal article" date="2002" name="Biochem. Biophys. Res. Commun.">
        <title>The trans-spliced variants of Sp1 mRNA in rat.</title>
        <authorList>
            <person name="Takahara T."/>
            <person name="Kasahara D."/>
            <person name="Mori D."/>
            <person name="Yanagisawa S."/>
            <person name="Akanuma H."/>
        </authorList>
    </citation>
    <scope>NUCLEOTIDE SEQUENCE [GENOMIC DNA] OF 1-559</scope>
    <scope>TISSUE SPECIFICITY</scope>
    <source>
        <tissue>Liver</tissue>
    </source>
</reference>
<reference key="3">
    <citation type="journal article" date="2008" name="Neuron">
        <title>A calcium-dependent switch in a CREST-BRG1 complex regulates activity-dependent gene expression.</title>
        <authorList>
            <person name="Qiu Z."/>
            <person name="Ghosh A."/>
        </authorList>
    </citation>
    <scope>FUNCTION</scope>
    <scope>INTERACTION WITH SMARCA4/BRG1</scope>
</reference>
<reference key="4">
    <citation type="journal article" date="2012" name="Nat. Commun.">
        <title>Quantitative maps of protein phosphorylation sites across 14 different rat organs and tissues.</title>
        <authorList>
            <person name="Lundby A."/>
            <person name="Secher A."/>
            <person name="Lage K."/>
            <person name="Nordsborg N.B."/>
            <person name="Dmytriyev A."/>
            <person name="Lundby C."/>
            <person name="Olsen J.V."/>
        </authorList>
    </citation>
    <scope>PHOSPHORYLATION [LARGE SCALE ANALYSIS] AT SER-2 AND SER-7</scope>
    <scope>IDENTIFICATION BY MASS SPECTROMETRY [LARGE SCALE ANALYSIS]</scope>
</reference>
<keyword id="KW-0007">Acetylation</keyword>
<keyword id="KW-0010">Activator</keyword>
<keyword id="KW-0090">Biological rhythms</keyword>
<keyword id="KW-0963">Cytoplasm</keyword>
<keyword id="KW-0238">DNA-binding</keyword>
<keyword id="KW-0325">Glycoprotein</keyword>
<keyword id="KW-1017">Isopeptide bond</keyword>
<keyword id="KW-0479">Metal-binding</keyword>
<keyword id="KW-0539">Nucleus</keyword>
<keyword id="KW-0597">Phosphoprotein</keyword>
<keyword id="KW-1185">Reference proteome</keyword>
<keyword id="KW-0677">Repeat</keyword>
<keyword id="KW-0678">Repressor</keyword>
<keyword id="KW-0804">Transcription</keyword>
<keyword id="KW-0805">Transcription regulation</keyword>
<keyword id="KW-0832">Ubl conjugation</keyword>
<keyword id="KW-0862">Zinc</keyword>
<keyword id="KW-0863">Zinc-finger</keyword>
<accession>Q01714</accession>
<accession>Q8K4R0</accession>
<feature type="initiator methionine" description="Removed" evidence="3">
    <location>
        <position position="1"/>
    </location>
</feature>
<feature type="chain" id="PRO_0000047139" description="Transcription factor Sp1">
    <location>
        <begin position="2"/>
        <end position="786"/>
    </location>
</feature>
<feature type="zinc finger region" description="C2H2-type 1" evidence="4">
    <location>
        <begin position="627"/>
        <end position="656"/>
    </location>
</feature>
<feature type="zinc finger region" description="C2H2-type 2" evidence="4">
    <location>
        <begin position="657"/>
        <end position="686"/>
    </location>
</feature>
<feature type="zinc finger region" description="C2H2-type 3" evidence="4">
    <location>
        <begin position="687"/>
        <end position="714"/>
    </location>
</feature>
<feature type="region of interest" description="Disordered" evidence="5">
    <location>
        <begin position="1"/>
        <end position="94"/>
    </location>
</feature>
<feature type="region of interest" description="Repressor domain" evidence="1">
    <location>
        <begin position="2"/>
        <end position="83"/>
    </location>
</feature>
<feature type="region of interest" description="Disordered" evidence="5">
    <location>
        <begin position="110"/>
        <end position="143"/>
    </location>
</feature>
<feature type="region of interest" description="Transactivation domain A (Gln-rich)" evidence="1">
    <location>
        <begin position="147"/>
        <end position="252"/>
    </location>
</feature>
<feature type="region of interest" description="Transactivation domain B (Gln-rich)" evidence="1">
    <location>
        <begin position="262"/>
        <end position="496"/>
    </location>
</feature>
<feature type="region of interest" description="Disordered" evidence="5">
    <location>
        <begin position="281"/>
        <end position="303"/>
    </location>
</feature>
<feature type="region of interest" description="Disordered" evidence="5">
    <location>
        <begin position="332"/>
        <end position="397"/>
    </location>
</feature>
<feature type="region of interest" description="Transactivation domain C (highly charged)" evidence="1">
    <location>
        <begin position="497"/>
        <end position="611"/>
    </location>
</feature>
<feature type="region of interest" description="Disordered" evidence="5">
    <location>
        <begin position="562"/>
        <end position="600"/>
    </location>
</feature>
<feature type="region of interest" description="VZV IE62-binding" evidence="1">
    <location>
        <begin position="620"/>
        <end position="786"/>
    </location>
</feature>
<feature type="region of interest" description="Domain D" evidence="1">
    <location>
        <begin position="709"/>
        <end position="786"/>
    </location>
</feature>
<feature type="short sequence motif" description="9aaTAD" evidence="3">
    <location>
        <begin position="463"/>
        <end position="471"/>
    </location>
</feature>
<feature type="compositionally biased region" description="Gly residues" evidence="5">
    <location>
        <begin position="19"/>
        <end position="33"/>
    </location>
</feature>
<feature type="compositionally biased region" description="Low complexity" evidence="5">
    <location>
        <begin position="36"/>
        <end position="48"/>
    </location>
</feature>
<feature type="compositionally biased region" description="Low complexity" evidence="5">
    <location>
        <begin position="73"/>
        <end position="86"/>
    </location>
</feature>
<feature type="compositionally biased region" description="Polar residues" evidence="5">
    <location>
        <begin position="110"/>
        <end position="124"/>
    </location>
</feature>
<feature type="compositionally biased region" description="Low complexity" evidence="5">
    <location>
        <begin position="125"/>
        <end position="137"/>
    </location>
</feature>
<feature type="compositionally biased region" description="Low complexity" evidence="5">
    <location>
        <begin position="343"/>
        <end position="358"/>
    </location>
</feature>
<feature type="compositionally biased region" description="Low complexity" evidence="5">
    <location>
        <begin position="372"/>
        <end position="397"/>
    </location>
</feature>
<feature type="site" description="Cleavage" evidence="1">
    <location>
        <begin position="64"/>
        <end position="65"/>
    </location>
</feature>
<feature type="modified residue" description="N-acetylserine" evidence="3">
    <location>
        <position position="2"/>
    </location>
</feature>
<feature type="modified residue" description="Phosphoserine" evidence="9">
    <location>
        <position position="2"/>
    </location>
</feature>
<feature type="modified residue" description="Phosphoserine" evidence="9">
    <location>
        <position position="7"/>
    </location>
</feature>
<feature type="modified residue" description="Phosphoserine" evidence="3">
    <location>
        <position position="60"/>
    </location>
</feature>
<feature type="modified residue" description="Phosphoserine; by ATM" evidence="3">
    <location>
        <position position="102"/>
    </location>
</feature>
<feature type="modified residue" description="Phosphothreonine; by MAPK8" evidence="3">
    <location>
        <position position="279"/>
    </location>
</feature>
<feature type="modified residue" description="Phosphothreonine; by MAPK1 and MAPK3" evidence="3">
    <location>
        <position position="454"/>
    </location>
</feature>
<feature type="modified residue" description="Phosphoserine; alternate" evidence="3">
    <location>
        <position position="613"/>
    </location>
</feature>
<feature type="modified residue" description="Phosphothreonine; alternate" evidence="3">
    <location>
        <position position="641"/>
    </location>
</feature>
<feature type="modified residue" description="Phosphoserine; by PKC/PRKCZ; alternate" evidence="3">
    <location>
        <position position="642"/>
    </location>
</feature>
<feature type="modified residue" description="Phosphothreonine; by PKC/PRKCZ" evidence="3">
    <location>
        <position position="652"/>
    </location>
</feature>
<feature type="modified residue" description="Phosphothreonine" evidence="3">
    <location>
        <position position="669"/>
    </location>
</feature>
<feature type="modified residue" description="Phosphoserine; by PKC/PRKCZ" evidence="3">
    <location>
        <position position="671"/>
    </location>
</feature>
<feature type="modified residue" description="Phosphothreonine; by PKC/PRKCZ" evidence="3">
    <location>
        <position position="682"/>
    </location>
</feature>
<feature type="modified residue" description="Phosphoserine; alternate" evidence="3">
    <location>
        <position position="699"/>
    </location>
</feature>
<feature type="modified residue" description="Phosphoserine; alternate" evidence="3">
    <location>
        <position position="703"/>
    </location>
</feature>
<feature type="modified residue" description="N6-acetyllysine" evidence="3">
    <location>
        <position position="704"/>
    </location>
</feature>
<feature type="modified residue" description="Phosphothreonine; by MAPK1, MAPK3 and MAPK8" evidence="3">
    <location>
        <position position="740"/>
    </location>
</feature>
<feature type="glycosylation site" description="O-linked (GlcNAc) serine" evidence="1">
    <location>
        <position position="492"/>
    </location>
</feature>
<feature type="glycosylation site" description="O-linked (GlcNAc) serine; alternate" evidence="1">
    <location>
        <position position="613"/>
    </location>
</feature>
<feature type="glycosylation site" description="O-linked (GlcNAc) threonine; alternate" evidence="1">
    <location>
        <position position="641"/>
    </location>
</feature>
<feature type="glycosylation site" description="O-linked (GlcNAc) serine; alternate" evidence="1">
    <location>
        <position position="642"/>
    </location>
</feature>
<feature type="glycosylation site" description="O-linked (GlcNAc) serine; alternate" evidence="1">
    <location>
        <position position="699"/>
    </location>
</feature>
<feature type="glycosylation site" description="O-linked (GlcNAc) serine; alternate" evidence="1">
    <location>
        <position position="703"/>
    </location>
</feature>
<feature type="cross-link" description="Glycyl lysine isopeptide (Lys-Gly) (interchain with G-Cter in SUMO); alternate" evidence="1">
    <location>
        <position position="15"/>
    </location>
</feature>
<feature type="cross-link" description="Glycyl lysine isopeptide (Lys-Gly) (interchain with G-Cter in SUMO2); alternate" evidence="3">
    <location>
        <position position="15"/>
    </location>
</feature>
<feature type="sequence conflict" description="In Ref. 1; BAA02235." evidence="8" ref="1">
    <original>N</original>
    <variation>NEN</variation>
    <location>
        <position position="78"/>
    </location>
</feature>